<name>RL4_PASMU</name>
<accession>Q9CL33</accession>
<proteinExistence type="inferred from homology"/>
<organism>
    <name type="scientific">Pasteurella multocida (strain Pm70)</name>
    <dbReference type="NCBI Taxonomy" id="272843"/>
    <lineage>
        <taxon>Bacteria</taxon>
        <taxon>Pseudomonadati</taxon>
        <taxon>Pseudomonadota</taxon>
        <taxon>Gammaproteobacteria</taxon>
        <taxon>Pasteurellales</taxon>
        <taxon>Pasteurellaceae</taxon>
        <taxon>Pasteurella</taxon>
    </lineage>
</organism>
<reference key="1">
    <citation type="journal article" date="2001" name="Proc. Natl. Acad. Sci. U.S.A.">
        <title>Complete genomic sequence of Pasteurella multocida Pm70.</title>
        <authorList>
            <person name="May B.J."/>
            <person name="Zhang Q."/>
            <person name="Li L.L."/>
            <person name="Paustian M.L."/>
            <person name="Whittam T.S."/>
            <person name="Kapur V."/>
        </authorList>
    </citation>
    <scope>NUCLEOTIDE SEQUENCE [LARGE SCALE GENOMIC DNA]</scope>
    <source>
        <strain>Pm70</strain>
    </source>
</reference>
<dbReference type="EMBL" id="AE004439">
    <property type="protein sequence ID" value="AAK03498.1"/>
    <property type="molecule type" value="Genomic_DNA"/>
</dbReference>
<dbReference type="RefSeq" id="WP_005717930.1">
    <property type="nucleotide sequence ID" value="NC_002663.1"/>
</dbReference>
<dbReference type="SMR" id="Q9CL33"/>
<dbReference type="STRING" id="272843.PM1414"/>
<dbReference type="EnsemblBacteria" id="AAK03498">
    <property type="protein sequence ID" value="AAK03498"/>
    <property type="gene ID" value="PM1414"/>
</dbReference>
<dbReference type="GeneID" id="77207027"/>
<dbReference type="KEGG" id="pmu:PM1414"/>
<dbReference type="HOGENOM" id="CLU_041575_5_2_6"/>
<dbReference type="OrthoDB" id="9803201at2"/>
<dbReference type="Proteomes" id="UP000000809">
    <property type="component" value="Chromosome"/>
</dbReference>
<dbReference type="GO" id="GO:1990904">
    <property type="term" value="C:ribonucleoprotein complex"/>
    <property type="evidence" value="ECO:0007669"/>
    <property type="project" value="UniProtKB-KW"/>
</dbReference>
<dbReference type="GO" id="GO:0005840">
    <property type="term" value="C:ribosome"/>
    <property type="evidence" value="ECO:0007669"/>
    <property type="project" value="UniProtKB-KW"/>
</dbReference>
<dbReference type="GO" id="GO:0019843">
    <property type="term" value="F:rRNA binding"/>
    <property type="evidence" value="ECO:0007669"/>
    <property type="project" value="UniProtKB-UniRule"/>
</dbReference>
<dbReference type="GO" id="GO:0003735">
    <property type="term" value="F:structural constituent of ribosome"/>
    <property type="evidence" value="ECO:0007669"/>
    <property type="project" value="InterPro"/>
</dbReference>
<dbReference type="GO" id="GO:0006412">
    <property type="term" value="P:translation"/>
    <property type="evidence" value="ECO:0007669"/>
    <property type="project" value="UniProtKB-UniRule"/>
</dbReference>
<dbReference type="FunFam" id="3.40.1370.10:FF:000001">
    <property type="entry name" value="50S ribosomal protein L4"/>
    <property type="match status" value="1"/>
</dbReference>
<dbReference type="Gene3D" id="3.40.1370.10">
    <property type="match status" value="1"/>
</dbReference>
<dbReference type="HAMAP" id="MF_01328_B">
    <property type="entry name" value="Ribosomal_uL4_B"/>
    <property type="match status" value="1"/>
</dbReference>
<dbReference type="InterPro" id="IPR002136">
    <property type="entry name" value="Ribosomal_uL4"/>
</dbReference>
<dbReference type="InterPro" id="IPR013005">
    <property type="entry name" value="Ribosomal_uL4-like"/>
</dbReference>
<dbReference type="InterPro" id="IPR023574">
    <property type="entry name" value="Ribosomal_uL4_dom_sf"/>
</dbReference>
<dbReference type="NCBIfam" id="TIGR03953">
    <property type="entry name" value="rplD_bact"/>
    <property type="match status" value="1"/>
</dbReference>
<dbReference type="PANTHER" id="PTHR10746">
    <property type="entry name" value="50S RIBOSOMAL PROTEIN L4"/>
    <property type="match status" value="1"/>
</dbReference>
<dbReference type="PANTHER" id="PTHR10746:SF6">
    <property type="entry name" value="LARGE RIBOSOMAL SUBUNIT PROTEIN UL4M"/>
    <property type="match status" value="1"/>
</dbReference>
<dbReference type="Pfam" id="PF00573">
    <property type="entry name" value="Ribosomal_L4"/>
    <property type="match status" value="1"/>
</dbReference>
<dbReference type="SUPFAM" id="SSF52166">
    <property type="entry name" value="Ribosomal protein L4"/>
    <property type="match status" value="1"/>
</dbReference>
<comment type="function">
    <text evidence="1">One of the primary rRNA binding proteins, this protein initially binds near the 5'-end of the 23S rRNA. It is important during the early stages of 50S assembly. It makes multiple contacts with different domains of the 23S rRNA in the assembled 50S subunit and ribosome.</text>
</comment>
<comment type="function">
    <text evidence="1">Forms part of the polypeptide exit tunnel.</text>
</comment>
<comment type="subunit">
    <text evidence="1">Part of the 50S ribosomal subunit.</text>
</comment>
<comment type="similarity">
    <text evidence="1">Belongs to the universal ribosomal protein uL4 family.</text>
</comment>
<protein>
    <recommendedName>
        <fullName evidence="1">Large ribosomal subunit protein uL4</fullName>
    </recommendedName>
    <alternativeName>
        <fullName evidence="3">50S ribosomal protein L4</fullName>
    </alternativeName>
</protein>
<gene>
    <name evidence="1" type="primary">rplD</name>
    <name evidence="1" type="synonym">rpl4</name>
    <name type="ordered locus">PM1414</name>
</gene>
<sequence length="200" mass="22028">MELQVVGANALTVSETTFGREFNEALIHQVVVAYAAGARQGSRAQKTRAEVSGSGKKPWRQKGTGRARSGDIKSPIWRSGGVTFAAKPQDHSQKVNKKMYRGAIKSILSELVRQDRLIVVEKFEVEAPKTKVLVQKLKELALEDVLIITASLDENLFLAARNLYKVDVRDVQGIDPVSLIAFDKVVVTVDAVKQIEEMLA</sequence>
<keyword id="KW-1185">Reference proteome</keyword>
<keyword id="KW-0687">Ribonucleoprotein</keyword>
<keyword id="KW-0689">Ribosomal protein</keyword>
<keyword id="KW-0694">RNA-binding</keyword>
<keyword id="KW-0699">rRNA-binding</keyword>
<feature type="chain" id="PRO_0000129253" description="Large ribosomal subunit protein uL4">
    <location>
        <begin position="1"/>
        <end position="200"/>
    </location>
</feature>
<feature type="region of interest" description="Disordered" evidence="2">
    <location>
        <begin position="43"/>
        <end position="71"/>
    </location>
</feature>
<evidence type="ECO:0000255" key="1">
    <source>
        <dbReference type="HAMAP-Rule" id="MF_01328"/>
    </source>
</evidence>
<evidence type="ECO:0000256" key="2">
    <source>
        <dbReference type="SAM" id="MobiDB-lite"/>
    </source>
</evidence>
<evidence type="ECO:0000305" key="3"/>